<dbReference type="EC" id="3.1.1.29" evidence="1"/>
<dbReference type="EMBL" id="BX548174">
    <property type="protein sequence ID" value="CAE18709.1"/>
    <property type="molecule type" value="Genomic_DNA"/>
</dbReference>
<dbReference type="RefSeq" id="WP_011131888.1">
    <property type="nucleotide sequence ID" value="NC_005072.1"/>
</dbReference>
<dbReference type="SMR" id="Q7V342"/>
<dbReference type="STRING" id="59919.PMM0250"/>
<dbReference type="KEGG" id="pmm:PMM0250"/>
<dbReference type="eggNOG" id="COG0193">
    <property type="taxonomic scope" value="Bacteria"/>
</dbReference>
<dbReference type="HOGENOM" id="CLU_062456_3_1_3"/>
<dbReference type="OrthoDB" id="9800507at2"/>
<dbReference type="Proteomes" id="UP000001026">
    <property type="component" value="Chromosome"/>
</dbReference>
<dbReference type="GO" id="GO:0005737">
    <property type="term" value="C:cytoplasm"/>
    <property type="evidence" value="ECO:0007669"/>
    <property type="project" value="UniProtKB-SubCell"/>
</dbReference>
<dbReference type="GO" id="GO:0004045">
    <property type="term" value="F:peptidyl-tRNA hydrolase activity"/>
    <property type="evidence" value="ECO:0007669"/>
    <property type="project" value="UniProtKB-UniRule"/>
</dbReference>
<dbReference type="GO" id="GO:0000049">
    <property type="term" value="F:tRNA binding"/>
    <property type="evidence" value="ECO:0007669"/>
    <property type="project" value="UniProtKB-UniRule"/>
</dbReference>
<dbReference type="GO" id="GO:0006515">
    <property type="term" value="P:protein quality control for misfolded or incompletely synthesized proteins"/>
    <property type="evidence" value="ECO:0007669"/>
    <property type="project" value="UniProtKB-UniRule"/>
</dbReference>
<dbReference type="GO" id="GO:0072344">
    <property type="term" value="P:rescue of stalled ribosome"/>
    <property type="evidence" value="ECO:0007669"/>
    <property type="project" value="UniProtKB-UniRule"/>
</dbReference>
<dbReference type="CDD" id="cd00462">
    <property type="entry name" value="PTH"/>
    <property type="match status" value="1"/>
</dbReference>
<dbReference type="FunFam" id="3.40.50.1470:FF:000001">
    <property type="entry name" value="Peptidyl-tRNA hydrolase"/>
    <property type="match status" value="1"/>
</dbReference>
<dbReference type="Gene3D" id="3.40.50.1470">
    <property type="entry name" value="Peptidyl-tRNA hydrolase"/>
    <property type="match status" value="1"/>
</dbReference>
<dbReference type="HAMAP" id="MF_00083">
    <property type="entry name" value="Pept_tRNA_hydro_bact"/>
    <property type="match status" value="1"/>
</dbReference>
<dbReference type="InterPro" id="IPR001328">
    <property type="entry name" value="Pept_tRNA_hydro"/>
</dbReference>
<dbReference type="InterPro" id="IPR018171">
    <property type="entry name" value="Pept_tRNA_hydro_CS"/>
</dbReference>
<dbReference type="InterPro" id="IPR036416">
    <property type="entry name" value="Pept_tRNA_hydro_sf"/>
</dbReference>
<dbReference type="NCBIfam" id="TIGR00447">
    <property type="entry name" value="pth"/>
    <property type="match status" value="1"/>
</dbReference>
<dbReference type="PANTHER" id="PTHR17224">
    <property type="entry name" value="PEPTIDYL-TRNA HYDROLASE"/>
    <property type="match status" value="1"/>
</dbReference>
<dbReference type="PANTHER" id="PTHR17224:SF1">
    <property type="entry name" value="PEPTIDYL-TRNA HYDROLASE"/>
    <property type="match status" value="1"/>
</dbReference>
<dbReference type="Pfam" id="PF01195">
    <property type="entry name" value="Pept_tRNA_hydro"/>
    <property type="match status" value="1"/>
</dbReference>
<dbReference type="SUPFAM" id="SSF53178">
    <property type="entry name" value="Peptidyl-tRNA hydrolase-like"/>
    <property type="match status" value="1"/>
</dbReference>
<dbReference type="PROSITE" id="PS01195">
    <property type="entry name" value="PEPT_TRNA_HYDROL_1"/>
    <property type="match status" value="1"/>
</dbReference>
<dbReference type="PROSITE" id="PS01196">
    <property type="entry name" value="PEPT_TRNA_HYDROL_2"/>
    <property type="match status" value="1"/>
</dbReference>
<name>PTH_PROMP</name>
<sequence length="203" mass="23634">MNNNEKFIIGLGNPGKEYIQNRHNIGFLLLENFSEKYDSKFTLKNKLKSWYSEFKINNFTYRLFMPNTFMNNSGNAVRAIVDWYKIDLDRLFIIVDDIDLPLGKIRFRKKGSSGGHNGIKDIINKLQTENFNRIKIGIGSPPVNERKKTLNTISHVLGNISSKESLTLDRVYKKLIESLIELNDKNEDYIISELNSFHREENL</sequence>
<keyword id="KW-0963">Cytoplasm</keyword>
<keyword id="KW-0378">Hydrolase</keyword>
<keyword id="KW-0694">RNA-binding</keyword>
<keyword id="KW-0820">tRNA-binding</keyword>
<comment type="function">
    <text evidence="1">Hydrolyzes ribosome-free peptidyl-tRNAs (with 1 or more amino acids incorporated), which drop off the ribosome during protein synthesis, or as a result of ribosome stalling.</text>
</comment>
<comment type="function">
    <text evidence="1">Catalyzes the release of premature peptidyl moieties from peptidyl-tRNA molecules trapped in stalled 50S ribosomal subunits, and thus maintains levels of free tRNAs and 50S ribosomes.</text>
</comment>
<comment type="catalytic activity">
    <reaction evidence="1">
        <text>an N-acyl-L-alpha-aminoacyl-tRNA + H2O = an N-acyl-L-amino acid + a tRNA + H(+)</text>
        <dbReference type="Rhea" id="RHEA:54448"/>
        <dbReference type="Rhea" id="RHEA-COMP:10123"/>
        <dbReference type="Rhea" id="RHEA-COMP:13883"/>
        <dbReference type="ChEBI" id="CHEBI:15377"/>
        <dbReference type="ChEBI" id="CHEBI:15378"/>
        <dbReference type="ChEBI" id="CHEBI:59874"/>
        <dbReference type="ChEBI" id="CHEBI:78442"/>
        <dbReference type="ChEBI" id="CHEBI:138191"/>
        <dbReference type="EC" id="3.1.1.29"/>
    </reaction>
</comment>
<comment type="subunit">
    <text evidence="1">Monomer.</text>
</comment>
<comment type="subcellular location">
    <subcellularLocation>
        <location evidence="1">Cytoplasm</location>
    </subcellularLocation>
</comment>
<comment type="similarity">
    <text evidence="1">Belongs to the PTH family.</text>
</comment>
<organism>
    <name type="scientific">Prochlorococcus marinus subsp. pastoris (strain CCMP1986 / NIES-2087 / MED4)</name>
    <dbReference type="NCBI Taxonomy" id="59919"/>
    <lineage>
        <taxon>Bacteria</taxon>
        <taxon>Bacillati</taxon>
        <taxon>Cyanobacteriota</taxon>
        <taxon>Cyanophyceae</taxon>
        <taxon>Synechococcales</taxon>
        <taxon>Prochlorococcaceae</taxon>
        <taxon>Prochlorococcus</taxon>
    </lineage>
</organism>
<protein>
    <recommendedName>
        <fullName evidence="1">Peptidyl-tRNA hydrolase</fullName>
        <shortName evidence="1">Pth</shortName>
        <ecNumber evidence="1">3.1.1.29</ecNumber>
    </recommendedName>
</protein>
<proteinExistence type="inferred from homology"/>
<gene>
    <name evidence="1" type="primary">pth</name>
    <name type="ordered locus">PMM0250</name>
</gene>
<evidence type="ECO:0000255" key="1">
    <source>
        <dbReference type="HAMAP-Rule" id="MF_00083"/>
    </source>
</evidence>
<accession>Q7V342</accession>
<feature type="chain" id="PRO_0000187795" description="Peptidyl-tRNA hydrolase">
    <location>
        <begin position="1"/>
        <end position="203"/>
    </location>
</feature>
<feature type="active site" description="Proton acceptor" evidence="1">
    <location>
        <position position="23"/>
    </location>
</feature>
<feature type="binding site" evidence="1">
    <location>
        <position position="18"/>
    </location>
    <ligand>
        <name>tRNA</name>
        <dbReference type="ChEBI" id="CHEBI:17843"/>
    </ligand>
</feature>
<feature type="binding site" evidence="1">
    <location>
        <position position="69"/>
    </location>
    <ligand>
        <name>tRNA</name>
        <dbReference type="ChEBI" id="CHEBI:17843"/>
    </ligand>
</feature>
<feature type="binding site" evidence="1">
    <location>
        <position position="71"/>
    </location>
    <ligand>
        <name>tRNA</name>
        <dbReference type="ChEBI" id="CHEBI:17843"/>
    </ligand>
</feature>
<feature type="binding site" evidence="1">
    <location>
        <position position="117"/>
    </location>
    <ligand>
        <name>tRNA</name>
        <dbReference type="ChEBI" id="CHEBI:17843"/>
    </ligand>
</feature>
<feature type="site" description="Discriminates between blocked and unblocked aminoacyl-tRNA" evidence="1">
    <location>
        <position position="13"/>
    </location>
</feature>
<feature type="site" description="Stabilizes the basic form of H active site to accept a proton" evidence="1">
    <location>
        <position position="96"/>
    </location>
</feature>
<reference key="1">
    <citation type="journal article" date="2003" name="Nature">
        <title>Genome divergence in two Prochlorococcus ecotypes reflects oceanic niche differentiation.</title>
        <authorList>
            <person name="Rocap G."/>
            <person name="Larimer F.W."/>
            <person name="Lamerdin J.E."/>
            <person name="Malfatti S."/>
            <person name="Chain P."/>
            <person name="Ahlgren N.A."/>
            <person name="Arellano A."/>
            <person name="Coleman M."/>
            <person name="Hauser L."/>
            <person name="Hess W.R."/>
            <person name="Johnson Z.I."/>
            <person name="Land M.L."/>
            <person name="Lindell D."/>
            <person name="Post A.F."/>
            <person name="Regala W."/>
            <person name="Shah M."/>
            <person name="Shaw S.L."/>
            <person name="Steglich C."/>
            <person name="Sullivan M.B."/>
            <person name="Ting C.S."/>
            <person name="Tolonen A."/>
            <person name="Webb E.A."/>
            <person name="Zinser E.R."/>
            <person name="Chisholm S.W."/>
        </authorList>
    </citation>
    <scope>NUCLEOTIDE SEQUENCE [LARGE SCALE GENOMIC DNA]</scope>
    <source>
        <strain>CCMP1986 / NIES-2087 / MED4</strain>
    </source>
</reference>